<organism>
    <name type="scientific">Porphyra purpurea</name>
    <name type="common">Red seaweed</name>
    <name type="synonym">Ulva purpurea</name>
    <dbReference type="NCBI Taxonomy" id="2787"/>
    <lineage>
        <taxon>Eukaryota</taxon>
        <taxon>Rhodophyta</taxon>
        <taxon>Bangiophyceae</taxon>
        <taxon>Bangiales</taxon>
        <taxon>Bangiaceae</taxon>
        <taxon>Porphyra</taxon>
    </lineage>
</organism>
<proteinExistence type="inferred from homology"/>
<reference key="1">
    <citation type="journal article" date="1995" name="Plant Mol. Biol. Rep.">
        <title>Complete nucleotide sequence of the Porphyra purpurea chloroplast genome.</title>
        <authorList>
            <person name="Reith M.E."/>
            <person name="Munholland J."/>
        </authorList>
    </citation>
    <scope>NUCLEOTIDE SEQUENCE [LARGE SCALE GENOMIC DNA]</scope>
    <source>
        <strain>Avonport</strain>
    </source>
</reference>
<dbReference type="EMBL" id="U38804">
    <property type="protein sequence ID" value="AAC08215.1"/>
    <property type="molecule type" value="Genomic_DNA"/>
</dbReference>
<dbReference type="PIR" id="S73250">
    <property type="entry name" value="S73250"/>
</dbReference>
<dbReference type="RefSeq" id="NP_053939.1">
    <property type="nucleotide sequence ID" value="NC_000925.1"/>
</dbReference>
<dbReference type="SMR" id="P51329"/>
<dbReference type="GeneID" id="809961"/>
<dbReference type="GO" id="GO:0009507">
    <property type="term" value="C:chloroplast"/>
    <property type="evidence" value="ECO:0007669"/>
    <property type="project" value="UniProtKB-SubCell"/>
</dbReference>
<dbReference type="InterPro" id="IPR008470">
    <property type="entry name" value="Uncharacterised_Ycf33"/>
</dbReference>
<dbReference type="Pfam" id="PF05421">
    <property type="entry name" value="DUF751"/>
    <property type="match status" value="1"/>
</dbReference>
<evidence type="ECO:0000305" key="1"/>
<accession>P51329</accession>
<comment type="subcellular location">
    <subcellularLocation>
        <location>Plastid</location>
        <location>Chloroplast</location>
    </subcellularLocation>
</comment>
<comment type="similarity">
    <text evidence="1">Belongs to the ycf33 family.</text>
</comment>
<name>YCF33_PORPU</name>
<feature type="chain" id="PRO_0000217343" description="Uncharacterized protein ycf33">
    <location>
        <begin position="1"/>
        <end position="67"/>
    </location>
</feature>
<keyword id="KW-0150">Chloroplast</keyword>
<keyword id="KW-0934">Plastid</keyword>
<geneLocation type="chloroplast"/>
<gene>
    <name type="primary">ycf33</name>
</gene>
<sequence>MSRFWNNVVKFPRFLVSVILGLILTIISPFFVLFRKPSTSFFFIISFTGLLVVLTAIIKKMLNIECC</sequence>
<protein>
    <recommendedName>
        <fullName>Uncharacterized protein ycf33</fullName>
    </recommendedName>
</protein>